<dbReference type="EC" id="2.7.7.6" evidence="1 4"/>
<dbReference type="EMBL" id="CP000077">
    <property type="protein sequence ID" value="AAY80231.1"/>
    <property type="molecule type" value="Genomic_DNA"/>
</dbReference>
<dbReference type="RefSeq" id="WP_011277733.1">
    <property type="nucleotide sequence ID" value="NC_007181.1"/>
</dbReference>
<dbReference type="PDB" id="7OK0">
    <property type="method" value="EM"/>
    <property type="resolution" value="2.90 A"/>
    <property type="chains" value="P=1-48"/>
</dbReference>
<dbReference type="PDB" id="7OQ4">
    <property type="method" value="EM"/>
    <property type="resolution" value="3.27 A"/>
    <property type="chains" value="P=1-48"/>
</dbReference>
<dbReference type="PDB" id="7OQY">
    <property type="method" value="EM"/>
    <property type="resolution" value="2.61 A"/>
    <property type="chains" value="P=1-48"/>
</dbReference>
<dbReference type="PDBsum" id="7OK0"/>
<dbReference type="PDBsum" id="7OQ4"/>
<dbReference type="PDBsum" id="7OQY"/>
<dbReference type="EMDB" id="EMD-12960"/>
<dbReference type="EMDB" id="EMD-13026"/>
<dbReference type="EMDB" id="EMD-13034"/>
<dbReference type="SMR" id="Q4JAE8"/>
<dbReference type="STRING" id="330779.Saci_0864"/>
<dbReference type="GeneID" id="31536145"/>
<dbReference type="KEGG" id="sai:Saci_0864"/>
<dbReference type="PATRIC" id="fig|330779.12.peg.827"/>
<dbReference type="eggNOG" id="arCOG04341">
    <property type="taxonomic scope" value="Archaea"/>
</dbReference>
<dbReference type="HOGENOM" id="CLU_179456_2_0_2"/>
<dbReference type="Proteomes" id="UP000001018">
    <property type="component" value="Chromosome"/>
</dbReference>
<dbReference type="GO" id="GO:0005737">
    <property type="term" value="C:cytoplasm"/>
    <property type="evidence" value="ECO:0007669"/>
    <property type="project" value="UniProtKB-SubCell"/>
</dbReference>
<dbReference type="GO" id="GO:0000428">
    <property type="term" value="C:DNA-directed RNA polymerase complex"/>
    <property type="evidence" value="ECO:0000314"/>
    <property type="project" value="UniProtKB"/>
</dbReference>
<dbReference type="GO" id="GO:0003677">
    <property type="term" value="F:DNA binding"/>
    <property type="evidence" value="ECO:0007669"/>
    <property type="project" value="InterPro"/>
</dbReference>
<dbReference type="GO" id="GO:0003899">
    <property type="term" value="F:DNA-directed RNA polymerase activity"/>
    <property type="evidence" value="ECO:0000314"/>
    <property type="project" value="UniProtKB"/>
</dbReference>
<dbReference type="GO" id="GO:0008270">
    <property type="term" value="F:zinc ion binding"/>
    <property type="evidence" value="ECO:0007669"/>
    <property type="project" value="UniProtKB-UniRule"/>
</dbReference>
<dbReference type="GO" id="GO:0006351">
    <property type="term" value="P:DNA-templated transcription"/>
    <property type="evidence" value="ECO:0000314"/>
    <property type="project" value="UniProtKB"/>
</dbReference>
<dbReference type="Gene3D" id="2.20.28.30">
    <property type="entry name" value="RNA polymerase ii, chain L"/>
    <property type="match status" value="1"/>
</dbReference>
<dbReference type="HAMAP" id="MF_00615">
    <property type="entry name" value="RNApol_arch_Rpo12"/>
    <property type="match status" value="1"/>
</dbReference>
<dbReference type="InterPro" id="IPR006591">
    <property type="entry name" value="RNAP_P/RPABC4"/>
</dbReference>
<dbReference type="InterPro" id="IPR029040">
    <property type="entry name" value="RPABC4/Spt4"/>
</dbReference>
<dbReference type="InterPro" id="IPR023464">
    <property type="entry name" value="Rpo12"/>
</dbReference>
<dbReference type="NCBIfam" id="NF001604">
    <property type="entry name" value="PRK00398.1-1"/>
    <property type="match status" value="1"/>
</dbReference>
<dbReference type="Pfam" id="PF03604">
    <property type="entry name" value="Zn_ribbon_RPAB4"/>
    <property type="match status" value="1"/>
</dbReference>
<dbReference type="SMART" id="SM00659">
    <property type="entry name" value="RPOLCX"/>
    <property type="match status" value="1"/>
</dbReference>
<dbReference type="SUPFAM" id="SSF63393">
    <property type="entry name" value="RNA polymerase subunits"/>
    <property type="match status" value="1"/>
</dbReference>
<organism>
    <name type="scientific">Sulfolobus acidocaldarius (strain ATCC 33909 / DSM 639 / JCM 8929 / NBRC 15157 / NCIMB 11770)</name>
    <dbReference type="NCBI Taxonomy" id="330779"/>
    <lineage>
        <taxon>Archaea</taxon>
        <taxon>Thermoproteota</taxon>
        <taxon>Thermoprotei</taxon>
        <taxon>Sulfolobales</taxon>
        <taxon>Sulfolobaceae</taxon>
        <taxon>Sulfolobus</taxon>
    </lineage>
</organism>
<protein>
    <recommendedName>
        <fullName evidence="1">DNA-directed RNA polymerase subunit Rpo12</fullName>
        <ecNumber evidence="1 4">2.7.7.6</ecNumber>
    </recommendedName>
    <alternativeName>
        <fullName evidence="1">DNA-directed RNA polymerase subunit P</fullName>
    </alternativeName>
</protein>
<accession>Q4JAE8</accession>
<evidence type="ECO:0000255" key="1">
    <source>
        <dbReference type="HAMAP-Rule" id="MF_00615"/>
    </source>
</evidence>
<evidence type="ECO:0000269" key="2">
    <source>
    </source>
</evidence>
<evidence type="ECO:0000269" key="3">
    <source>
    </source>
</evidence>
<evidence type="ECO:0000269" key="4">
    <source ref="3"/>
</evidence>
<evidence type="ECO:0000312" key="5">
    <source>
        <dbReference type="PDB" id="7OK0"/>
    </source>
</evidence>
<evidence type="ECO:0000312" key="6">
    <source>
        <dbReference type="PDB" id="7OQ4"/>
    </source>
</evidence>
<evidence type="ECO:0000312" key="7">
    <source>
        <dbReference type="PDB" id="7OQY"/>
    </source>
</evidence>
<evidence type="ECO:0007829" key="8">
    <source>
        <dbReference type="PDB" id="7OQY"/>
    </source>
</evidence>
<reference key="1">
    <citation type="journal article" date="2005" name="J. Bacteriol.">
        <title>The genome of Sulfolobus acidocaldarius, a model organism of the Crenarchaeota.</title>
        <authorList>
            <person name="Chen L."/>
            <person name="Bruegger K."/>
            <person name="Skovgaard M."/>
            <person name="Redder P."/>
            <person name="She Q."/>
            <person name="Torarinsson E."/>
            <person name="Greve B."/>
            <person name="Awayez M."/>
            <person name="Zibat A."/>
            <person name="Klenk H.-P."/>
            <person name="Garrett R.A."/>
        </authorList>
    </citation>
    <scope>NUCLEOTIDE SEQUENCE [LARGE SCALE GENOMIC DNA]</scope>
    <source>
        <strain>ATCC 33909 / DSM 639 / JCM 8929 / NBRC 15157 / NCIMB 11770</strain>
    </source>
</reference>
<reference key="2">
    <citation type="journal article" date="1992" name="Proc. Natl. Acad. Sci. U.S.A.">
        <title>Component H of the DNA-dependent RNA polymerases of Archaea is homologous to a subunit shared by the three eucaryal nuclear RNA polymerases.</title>
        <authorList>
            <person name="Klenk H.-P."/>
            <person name="Palm P."/>
            <person name="Lottspeich F."/>
            <person name="Zillig W."/>
        </authorList>
    </citation>
    <scope>SUBUNIT</scope>
    <source>
        <strain>ATCC 33909 / DSM 639 / JCM 8929 / NBRC 15157 / NCIMB 11770</strain>
    </source>
</reference>
<reference key="3">
    <citation type="journal article" date="1994" name="Syst. Appl. Microbiol.">
        <title>Structure and Function of the DNA-Dependent RNA Polymerase of Sulfolobus.</title>
        <authorList>
            <person name="Lanzendorfer M."/>
            <person name="Langer D."/>
            <person name="Hain J."/>
            <person name="Klenk H.-P."/>
            <person name="Holz I."/>
            <person name="Arnold-Ammer I."/>
            <person name="Zillig W."/>
        </authorList>
    </citation>
    <scope>FUNCTION</scope>
    <scope>CATALYTIC ACTIVITY</scope>
    <scope>SUBUNIT</scope>
    <source>
        <strain>ATCC 33909 / DSM 639 / JCM 8929 / NBRC 15157 / NCIMB 11770</strain>
    </source>
</reference>
<reference evidence="5 6 7" key="4">
    <citation type="journal article" date="2021" name="Nat. Commun.">
        <title>Structural basis of RNA polymerase inhibition by viral and host factors.</title>
        <authorList>
            <person name="Pilotto S."/>
            <person name="Fouqueau T."/>
            <person name="Lukoyanova N."/>
            <person name="Sheppard C."/>
            <person name="Lucas-Staat S."/>
            <person name="Diaz-Santin L.M."/>
            <person name="Matelska D."/>
            <person name="Prangishvili D."/>
            <person name="Cheung A.C.M."/>
            <person name="Werner F."/>
        </authorList>
    </citation>
    <scope>STRUCTURE BY ELECTRON MICROSCOPY (2.61 ANGSTROMS) OF RNAP WITH AND WITHOUT INHIBITORS</scope>
    <scope>COFACTOR</scope>
    <scope>SUBUNIT</scope>
    <source>
        <strain>ATCC 33909 / DSM 639 / JCM 8929 / NBRC 15157 / NCIMB 11770</strain>
    </source>
</reference>
<name>RPO12_SULAC</name>
<gene>
    <name evidence="1" type="primary">rpo12</name>
    <name evidence="1" type="synonym">rpoP</name>
    <name type="ordered locus">Saci_0864</name>
</gene>
<feature type="chain" id="PRO_0000159766" description="DNA-directed RNA polymerase subunit Rpo12">
    <location>
        <begin position="1"/>
        <end position="48"/>
    </location>
</feature>
<feature type="binding site" evidence="3 5 6 7">
    <location>
        <position position="6"/>
    </location>
    <ligand>
        <name>Zn(2+)</name>
        <dbReference type="ChEBI" id="CHEBI:29105"/>
    </ligand>
</feature>
<feature type="binding site" evidence="3 6 7">
    <location>
        <position position="9"/>
    </location>
    <ligand>
        <name>Zn(2+)</name>
        <dbReference type="ChEBI" id="CHEBI:29105"/>
    </ligand>
</feature>
<feature type="binding site" evidence="1 3 5 6 7">
    <location>
        <position position="26"/>
    </location>
    <ligand>
        <name>Zn(2+)</name>
        <dbReference type="ChEBI" id="CHEBI:29105"/>
    </ligand>
</feature>
<feature type="binding site" evidence="1 3 5 6 7">
    <location>
        <position position="29"/>
    </location>
    <ligand>
        <name>Zn(2+)</name>
        <dbReference type="ChEBI" id="CHEBI:29105"/>
    </ligand>
</feature>
<feature type="strand" evidence="8">
    <location>
        <begin position="3"/>
        <end position="6"/>
    </location>
</feature>
<feature type="strand" evidence="8">
    <location>
        <begin position="8"/>
        <end position="10"/>
    </location>
</feature>
<feature type="strand" evidence="8">
    <location>
        <begin position="14"/>
        <end position="16"/>
    </location>
</feature>
<feature type="strand" evidence="8">
    <location>
        <begin position="22"/>
        <end position="24"/>
    </location>
</feature>
<feature type="turn" evidence="8">
    <location>
        <begin position="27"/>
        <end position="29"/>
    </location>
</feature>
<feature type="strand" evidence="8">
    <location>
        <begin position="32"/>
        <end position="36"/>
    </location>
</feature>
<feature type="strand" evidence="8">
    <location>
        <begin position="43"/>
        <end position="46"/>
    </location>
</feature>
<keyword id="KW-0002">3D-structure</keyword>
<keyword id="KW-0963">Cytoplasm</keyword>
<keyword id="KW-0240">DNA-directed RNA polymerase</keyword>
<keyword id="KW-0479">Metal-binding</keyword>
<keyword id="KW-0548">Nucleotidyltransferase</keyword>
<keyword id="KW-1185">Reference proteome</keyword>
<keyword id="KW-0804">Transcription</keyword>
<keyword id="KW-0808">Transferase</keyword>
<keyword id="KW-0862">Zinc</keyword>
<sequence>MAKYRCGKCWKELDDDQLKTLPGVRCPYCGYRIIYMVRKPTVKIVKAI</sequence>
<comment type="function">
    <text evidence="1 4">DNA-dependent RNA polymerase (RNAP) catalyzes the transcription of DNA into RNA using the four ribonucleoside triphosphates as substrates.</text>
</comment>
<comment type="catalytic activity">
    <reaction evidence="1 4">
        <text>RNA(n) + a ribonucleoside 5'-triphosphate = RNA(n+1) + diphosphate</text>
        <dbReference type="Rhea" id="RHEA:21248"/>
        <dbReference type="Rhea" id="RHEA-COMP:14527"/>
        <dbReference type="Rhea" id="RHEA-COMP:17342"/>
        <dbReference type="ChEBI" id="CHEBI:33019"/>
        <dbReference type="ChEBI" id="CHEBI:61557"/>
        <dbReference type="ChEBI" id="CHEBI:140395"/>
        <dbReference type="EC" id="2.7.7.6"/>
    </reaction>
</comment>
<comment type="cofactor">
    <cofactor evidence="1 3 5 6 7">
        <name>Zn(2+)</name>
        <dbReference type="ChEBI" id="CHEBI:29105"/>
    </cofactor>
    <text evidence="1 3 5 6 7">Binds 1 zinc ion.</text>
</comment>
<comment type="subunit">
    <text evidence="2 3 4 5 6 7">Part of the 13-subunit RNA polymerase.</text>
</comment>
<comment type="subcellular location">
    <subcellularLocation>
        <location evidence="1">Cytoplasm</location>
    </subcellularLocation>
</comment>
<comment type="similarity">
    <text evidence="1">Belongs to the archaeal Rpo12/eukaryotic RPC10 RNA polymerase subunit family.</text>
</comment>
<proteinExistence type="evidence at protein level"/>